<protein>
    <recommendedName>
        <fullName evidence="1">Large ribosomal subunit protein uL3</fullName>
    </recommendedName>
    <alternativeName>
        <fullName evidence="2">50S ribosomal protein L3</fullName>
    </alternativeName>
</protein>
<sequence length="333" mass="37006">MRTVRPRAGSLAYYPRKRAKGIVPKYQSWPEYNGQPMLQGFAGYKAGMTHVIMIDDHKKSPTEGKEVMVPVTVIEIPAMTVAAIRVYVKDTYGKHPLTEVWAENLEALSGRITKAKTNNAAKATEKINAAIGDVVEVMVLMYTKPTELTGVPKKVPDLMEIRVAGGSAQERFDYALSILGTDVDMKSLLSEGQFADITGITKGKGFQGAVKRFGITLRKRKHARTKKERHIGTLGPWTPHHVRWQVPMPGQMGFQQRTEFNKRIIKIGENADEINPAGGFLHYGLVRNNYVLIKGSIPGPAKRLVRIRSATRMGEQKIQAPVVEYVSLQSKQG</sequence>
<feature type="chain" id="PRO_0000353623" description="Large ribosomal subunit protein uL3">
    <location>
        <begin position="1"/>
        <end position="333"/>
    </location>
</feature>
<name>RL3_METLZ</name>
<comment type="function">
    <text evidence="1">One of the primary rRNA binding proteins, it binds directly near the 3'-end of the 23S rRNA, where it nucleates assembly of the 50S subunit.</text>
</comment>
<comment type="subunit">
    <text evidence="1">Part of the 50S ribosomal subunit. Forms a cluster with proteins L14 and L24e.</text>
</comment>
<comment type="similarity">
    <text evidence="1">Belongs to the universal ribosomal protein uL3 family.</text>
</comment>
<dbReference type="EMBL" id="CP000559">
    <property type="protein sequence ID" value="ABN06259.1"/>
    <property type="molecule type" value="Genomic_DNA"/>
</dbReference>
<dbReference type="RefSeq" id="WP_011832460.1">
    <property type="nucleotide sequence ID" value="NC_008942.1"/>
</dbReference>
<dbReference type="SMR" id="A2SPK3"/>
<dbReference type="STRING" id="410358.Mlab_0081"/>
<dbReference type="GeneID" id="4794958"/>
<dbReference type="KEGG" id="mla:Mlab_0081"/>
<dbReference type="eggNOG" id="arCOG04070">
    <property type="taxonomic scope" value="Archaea"/>
</dbReference>
<dbReference type="HOGENOM" id="CLU_033361_2_0_2"/>
<dbReference type="OrthoDB" id="6121at2157"/>
<dbReference type="Proteomes" id="UP000000365">
    <property type="component" value="Chromosome"/>
</dbReference>
<dbReference type="GO" id="GO:0022625">
    <property type="term" value="C:cytosolic large ribosomal subunit"/>
    <property type="evidence" value="ECO:0007669"/>
    <property type="project" value="TreeGrafter"/>
</dbReference>
<dbReference type="GO" id="GO:0019843">
    <property type="term" value="F:rRNA binding"/>
    <property type="evidence" value="ECO:0007669"/>
    <property type="project" value="UniProtKB-UniRule"/>
</dbReference>
<dbReference type="GO" id="GO:0003735">
    <property type="term" value="F:structural constituent of ribosome"/>
    <property type="evidence" value="ECO:0007669"/>
    <property type="project" value="InterPro"/>
</dbReference>
<dbReference type="GO" id="GO:0006412">
    <property type="term" value="P:translation"/>
    <property type="evidence" value="ECO:0007669"/>
    <property type="project" value="UniProtKB-UniRule"/>
</dbReference>
<dbReference type="Gene3D" id="3.30.1430.10">
    <property type="match status" value="1"/>
</dbReference>
<dbReference type="Gene3D" id="4.10.960.10">
    <property type="entry name" value="Ribosomal protein L3, domain 3"/>
    <property type="match status" value="1"/>
</dbReference>
<dbReference type="Gene3D" id="2.40.30.10">
    <property type="entry name" value="Translation factors"/>
    <property type="match status" value="1"/>
</dbReference>
<dbReference type="HAMAP" id="MF_01325_A">
    <property type="entry name" value="Ribosomal_uL3_A"/>
    <property type="match status" value="1"/>
</dbReference>
<dbReference type="InterPro" id="IPR045077">
    <property type="entry name" value="L3_arc_euk"/>
</dbReference>
<dbReference type="InterPro" id="IPR044892">
    <property type="entry name" value="Ribosomal_L3_dom_3_arc_sf"/>
</dbReference>
<dbReference type="InterPro" id="IPR000597">
    <property type="entry name" value="Ribosomal_uL3"/>
</dbReference>
<dbReference type="InterPro" id="IPR019928">
    <property type="entry name" value="Ribosomal_uL3_arc"/>
</dbReference>
<dbReference type="InterPro" id="IPR019926">
    <property type="entry name" value="Ribosomal_uL3_CS"/>
</dbReference>
<dbReference type="InterPro" id="IPR009000">
    <property type="entry name" value="Transl_B-barrel_sf"/>
</dbReference>
<dbReference type="NCBIfam" id="TIGR03626">
    <property type="entry name" value="L3_arch"/>
    <property type="match status" value="1"/>
</dbReference>
<dbReference type="NCBIfam" id="NF003261">
    <property type="entry name" value="PRK04231.1"/>
    <property type="match status" value="1"/>
</dbReference>
<dbReference type="PANTHER" id="PTHR11363">
    <property type="entry name" value="60S RIBOSOMAL PROTEIN L3-RELATED"/>
    <property type="match status" value="1"/>
</dbReference>
<dbReference type="PANTHER" id="PTHR11363:SF5">
    <property type="entry name" value="LARGE RIBOSOMAL SUBUNIT PROTEIN UL3"/>
    <property type="match status" value="1"/>
</dbReference>
<dbReference type="Pfam" id="PF00297">
    <property type="entry name" value="Ribosomal_L3"/>
    <property type="match status" value="1"/>
</dbReference>
<dbReference type="SUPFAM" id="SSF50447">
    <property type="entry name" value="Translation proteins"/>
    <property type="match status" value="1"/>
</dbReference>
<dbReference type="PROSITE" id="PS00474">
    <property type="entry name" value="RIBOSOMAL_L3"/>
    <property type="match status" value="1"/>
</dbReference>
<accession>A2SPK3</accession>
<organism>
    <name type="scientific">Methanocorpusculum labreanum (strain ATCC 43576 / DSM 4855 / Z)</name>
    <dbReference type="NCBI Taxonomy" id="410358"/>
    <lineage>
        <taxon>Archaea</taxon>
        <taxon>Methanobacteriati</taxon>
        <taxon>Methanobacteriota</taxon>
        <taxon>Stenosarchaea group</taxon>
        <taxon>Methanomicrobia</taxon>
        <taxon>Methanomicrobiales</taxon>
        <taxon>Methanocorpusculaceae</taxon>
        <taxon>Methanocorpusculum</taxon>
    </lineage>
</organism>
<proteinExistence type="inferred from homology"/>
<reference key="1">
    <citation type="journal article" date="2009" name="Stand. Genomic Sci.">
        <title>Complete genome sequence of Methanocorpusculum labreanum type strain Z.</title>
        <authorList>
            <person name="Anderson I.J."/>
            <person name="Sieprawska-Lupa M."/>
            <person name="Goltsman E."/>
            <person name="Lapidus A."/>
            <person name="Copeland A."/>
            <person name="Glavina Del Rio T."/>
            <person name="Tice H."/>
            <person name="Dalin E."/>
            <person name="Barry K."/>
            <person name="Pitluck S."/>
            <person name="Hauser L."/>
            <person name="Land M."/>
            <person name="Lucas S."/>
            <person name="Richardson P."/>
            <person name="Whitman W.B."/>
            <person name="Kyrpides N.C."/>
        </authorList>
    </citation>
    <scope>NUCLEOTIDE SEQUENCE [LARGE SCALE GENOMIC DNA]</scope>
    <source>
        <strain>ATCC 43576 / DSM 4855 / Z</strain>
    </source>
</reference>
<keyword id="KW-1185">Reference proteome</keyword>
<keyword id="KW-0687">Ribonucleoprotein</keyword>
<keyword id="KW-0689">Ribosomal protein</keyword>
<keyword id="KW-0694">RNA-binding</keyword>
<keyword id="KW-0699">rRNA-binding</keyword>
<evidence type="ECO:0000255" key="1">
    <source>
        <dbReference type="HAMAP-Rule" id="MF_01325"/>
    </source>
</evidence>
<evidence type="ECO:0000305" key="2"/>
<gene>
    <name evidence="1" type="primary">rpl3</name>
    <name type="ordered locus">Mlab_0081</name>
</gene>